<name>CNOT7_XENTR</name>
<proteinExistence type="evidence at transcript level"/>
<keyword id="KW-0963">Cytoplasm</keyword>
<keyword id="KW-0269">Exonuclease</keyword>
<keyword id="KW-0378">Hydrolase</keyword>
<keyword id="KW-0460">Magnesium</keyword>
<keyword id="KW-0479">Metal-binding</keyword>
<keyword id="KW-0540">Nuclease</keyword>
<keyword id="KW-0539">Nucleus</keyword>
<keyword id="KW-1185">Reference proteome</keyword>
<keyword id="KW-0678">Repressor</keyword>
<keyword id="KW-0694">RNA-binding</keyword>
<keyword id="KW-0943">RNA-mediated gene silencing</keyword>
<keyword id="KW-0804">Transcription</keyword>
<keyword id="KW-0805">Transcription regulation</keyword>
<keyword id="KW-0810">Translation regulation</keyword>
<evidence type="ECO:0000250" key="1"/>
<evidence type="ECO:0000250" key="2">
    <source>
        <dbReference type="UniProtKB" id="Q9UIV1"/>
    </source>
</evidence>
<evidence type="ECO:0000305" key="3"/>
<feature type="chain" id="PRO_0000313897" description="CCR4-NOT transcription complex subunit 7">
    <location>
        <begin position="1"/>
        <end position="285"/>
    </location>
</feature>
<feature type="binding site" evidence="1">
    <location>
        <position position="40"/>
    </location>
    <ligand>
        <name>a divalent metal cation</name>
        <dbReference type="ChEBI" id="CHEBI:60240"/>
        <label>1</label>
        <note>catalytic</note>
    </ligand>
</feature>
<feature type="binding site" evidence="1">
    <location>
        <position position="40"/>
    </location>
    <ligand>
        <name>a divalent metal cation</name>
        <dbReference type="ChEBI" id="CHEBI:60240"/>
        <label>2</label>
        <note>catalytic</note>
    </ligand>
</feature>
<feature type="binding site" evidence="1">
    <location>
        <position position="42"/>
    </location>
    <ligand>
        <name>a divalent metal cation</name>
        <dbReference type="ChEBI" id="CHEBI:60240"/>
        <label>2</label>
        <note>catalytic</note>
    </ligand>
</feature>
<feature type="binding site" evidence="1">
    <location>
        <position position="161"/>
    </location>
    <ligand>
        <name>a divalent metal cation</name>
        <dbReference type="ChEBI" id="CHEBI:60240"/>
        <label>1</label>
        <note>catalytic</note>
    </ligand>
</feature>
<feature type="binding site" evidence="1">
    <location>
        <position position="230"/>
    </location>
    <ligand>
        <name>a divalent metal cation</name>
        <dbReference type="ChEBI" id="CHEBI:60240"/>
        <label>2</label>
        <note>catalytic</note>
    </ligand>
</feature>
<feature type="binding site" evidence="1">
    <location>
        <position position="278"/>
    </location>
    <ligand>
        <name>a divalent metal cation</name>
        <dbReference type="ChEBI" id="CHEBI:60240"/>
        <label>1</label>
        <note>catalytic</note>
    </ligand>
</feature>
<dbReference type="EC" id="3.1.13.4"/>
<dbReference type="EMBL" id="BC135920">
    <property type="protein sequence ID" value="AAI35921.1"/>
    <property type="molecule type" value="mRNA"/>
</dbReference>
<dbReference type="RefSeq" id="NP_001096375.1">
    <property type="nucleotide sequence ID" value="NM_001102905.1"/>
</dbReference>
<dbReference type="RefSeq" id="XP_017949366.1">
    <property type="nucleotide sequence ID" value="XM_018093877.1"/>
</dbReference>
<dbReference type="RefSeq" id="XP_031757521.1">
    <property type="nucleotide sequence ID" value="XM_031901661.1"/>
</dbReference>
<dbReference type="SMR" id="A4II96"/>
<dbReference type="FunCoup" id="A4II96">
    <property type="interactions" value="4194"/>
</dbReference>
<dbReference type="STRING" id="8364.ENSXETP00000023889"/>
<dbReference type="PaxDb" id="8364-ENSXETP00000001564"/>
<dbReference type="DNASU" id="100124970"/>
<dbReference type="GeneID" id="100124970"/>
<dbReference type="KEGG" id="xtr:100124970"/>
<dbReference type="AGR" id="Xenbase:XB-GENE-969324"/>
<dbReference type="CTD" id="29883"/>
<dbReference type="Xenbase" id="XB-GENE-969324">
    <property type="gene designation" value="cnot7"/>
</dbReference>
<dbReference type="eggNOG" id="KOG0304">
    <property type="taxonomic scope" value="Eukaryota"/>
</dbReference>
<dbReference type="InParanoid" id="A4II96"/>
<dbReference type="OMA" id="IKFMMRA"/>
<dbReference type="OrthoDB" id="1164111at2759"/>
<dbReference type="Reactome" id="R-XTR-429947">
    <property type="pathway name" value="Deadenylation of mRNA"/>
</dbReference>
<dbReference type="Reactome" id="R-XTR-6804115">
    <property type="pathway name" value="TP53 regulates transcription of additional cell cycle genes whose exact role in the p53 pathway remain uncertain"/>
</dbReference>
<dbReference type="Proteomes" id="UP000008143">
    <property type="component" value="Chromosome 1"/>
</dbReference>
<dbReference type="Bgee" id="ENSXETG00000000701">
    <property type="expression patterns" value="Expressed in skeletal muscle tissue and 13 other cell types or tissues"/>
</dbReference>
<dbReference type="ExpressionAtlas" id="A4II96">
    <property type="expression patterns" value="baseline"/>
</dbReference>
<dbReference type="GO" id="GO:0030014">
    <property type="term" value="C:CCR4-NOT complex"/>
    <property type="evidence" value="ECO:0000250"/>
    <property type="project" value="UniProtKB"/>
</dbReference>
<dbReference type="GO" id="GO:0005737">
    <property type="term" value="C:cytoplasm"/>
    <property type="evidence" value="ECO:0007669"/>
    <property type="project" value="UniProtKB-SubCell"/>
</dbReference>
<dbReference type="GO" id="GO:0005634">
    <property type="term" value="C:nucleus"/>
    <property type="evidence" value="ECO:0007669"/>
    <property type="project" value="UniProtKB-SubCell"/>
</dbReference>
<dbReference type="GO" id="GO:0000175">
    <property type="term" value="F:3'-5'-RNA exonuclease activity"/>
    <property type="evidence" value="ECO:0000250"/>
    <property type="project" value="UniProtKB"/>
</dbReference>
<dbReference type="GO" id="GO:0046872">
    <property type="term" value="F:metal ion binding"/>
    <property type="evidence" value="ECO:0007669"/>
    <property type="project" value="UniProtKB-KW"/>
</dbReference>
<dbReference type="GO" id="GO:0004535">
    <property type="term" value="F:poly(A)-specific ribonuclease activity"/>
    <property type="evidence" value="ECO:0000250"/>
    <property type="project" value="UniProtKB"/>
</dbReference>
<dbReference type="GO" id="GO:0003723">
    <property type="term" value="F:RNA binding"/>
    <property type="evidence" value="ECO:0007669"/>
    <property type="project" value="UniProtKB-KW"/>
</dbReference>
<dbReference type="GO" id="GO:0004532">
    <property type="term" value="F:RNA exonuclease activity"/>
    <property type="evidence" value="ECO:0000250"/>
    <property type="project" value="UniProtKB"/>
</dbReference>
<dbReference type="GO" id="GO:0035279">
    <property type="term" value="P:miRNA-mediated gene silencing by mRNA destabilization"/>
    <property type="evidence" value="ECO:0000250"/>
    <property type="project" value="UniProtKB"/>
</dbReference>
<dbReference type="GO" id="GO:0008285">
    <property type="term" value="P:negative regulation of cell population proliferation"/>
    <property type="evidence" value="ECO:0000250"/>
    <property type="project" value="UniProtKB"/>
</dbReference>
<dbReference type="GO" id="GO:0008284">
    <property type="term" value="P:positive regulation of cell population proliferation"/>
    <property type="evidence" value="ECO:0000250"/>
    <property type="project" value="UniProtKB"/>
</dbReference>
<dbReference type="GO" id="GO:1900153">
    <property type="term" value="P:positive regulation of nuclear-transcribed mRNA catabolic process, deadenylation-dependent decay"/>
    <property type="evidence" value="ECO:0000250"/>
    <property type="project" value="UniProtKB"/>
</dbReference>
<dbReference type="GO" id="GO:0060213">
    <property type="term" value="P:positive regulation of nuclear-transcribed mRNA poly(A) tail shortening"/>
    <property type="evidence" value="ECO:0000250"/>
    <property type="project" value="UniProtKB"/>
</dbReference>
<dbReference type="GO" id="GO:0006417">
    <property type="term" value="P:regulation of translation"/>
    <property type="evidence" value="ECO:0007669"/>
    <property type="project" value="UniProtKB-KW"/>
</dbReference>
<dbReference type="GO" id="GO:0031047">
    <property type="term" value="P:regulatory ncRNA-mediated gene silencing"/>
    <property type="evidence" value="ECO:0000250"/>
    <property type="project" value="UniProtKB"/>
</dbReference>
<dbReference type="FunFam" id="3.30.420.10:FF:000005">
    <property type="entry name" value="CCR4-NOT transcription complex subunit 7"/>
    <property type="match status" value="1"/>
</dbReference>
<dbReference type="Gene3D" id="3.30.420.10">
    <property type="entry name" value="Ribonuclease H-like superfamily/Ribonuclease H"/>
    <property type="match status" value="1"/>
</dbReference>
<dbReference type="InterPro" id="IPR039637">
    <property type="entry name" value="CNOT7/CNOT8/Pop2"/>
</dbReference>
<dbReference type="InterPro" id="IPR006941">
    <property type="entry name" value="RNase_CAF1"/>
</dbReference>
<dbReference type="InterPro" id="IPR012337">
    <property type="entry name" value="RNaseH-like_sf"/>
</dbReference>
<dbReference type="InterPro" id="IPR036397">
    <property type="entry name" value="RNaseH_sf"/>
</dbReference>
<dbReference type="PANTHER" id="PTHR10797">
    <property type="entry name" value="CCR4-NOT TRANSCRIPTION COMPLEX SUBUNIT"/>
    <property type="match status" value="1"/>
</dbReference>
<dbReference type="Pfam" id="PF04857">
    <property type="entry name" value="CAF1"/>
    <property type="match status" value="2"/>
</dbReference>
<dbReference type="SUPFAM" id="SSF53098">
    <property type="entry name" value="Ribonuclease H-like"/>
    <property type="match status" value="1"/>
</dbReference>
<accession>A4II96</accession>
<reference key="1">
    <citation type="submission" date="2007-03" db="EMBL/GenBank/DDBJ databases">
        <authorList>
            <consortium name="NIH - Xenopus Gene Collection (XGC) project"/>
        </authorList>
    </citation>
    <scope>NUCLEOTIDE SEQUENCE [LARGE SCALE MRNA]</scope>
    <source>
        <tissue>Embryo</tissue>
    </source>
</reference>
<protein>
    <recommendedName>
        <fullName>CCR4-NOT transcription complex subunit 7</fullName>
        <ecNumber>3.1.13.4</ecNumber>
    </recommendedName>
    <alternativeName>
        <fullName>CCR4-associated factor 1</fullName>
        <shortName>CAF-1</shortName>
    </alternativeName>
</protein>
<gene>
    <name type="primary">cnot7</name>
    <name type="synonym">caf1</name>
</gene>
<organism>
    <name type="scientific">Xenopus tropicalis</name>
    <name type="common">Western clawed frog</name>
    <name type="synonym">Silurana tropicalis</name>
    <dbReference type="NCBI Taxonomy" id="8364"/>
    <lineage>
        <taxon>Eukaryota</taxon>
        <taxon>Metazoa</taxon>
        <taxon>Chordata</taxon>
        <taxon>Craniata</taxon>
        <taxon>Vertebrata</taxon>
        <taxon>Euteleostomi</taxon>
        <taxon>Amphibia</taxon>
        <taxon>Batrachia</taxon>
        <taxon>Anura</taxon>
        <taxon>Pipoidea</taxon>
        <taxon>Pipidae</taxon>
        <taxon>Xenopodinae</taxon>
        <taxon>Xenopus</taxon>
        <taxon>Silurana</taxon>
    </lineage>
</organism>
<sequence>MPAATVDLSQRICEVWACNLDDQMKRIRQVIRKYNYVAMDTEFPGVVARPIGEFRSNADYQYQLLRCNVDLLKIIQLGLTFVNEQGEYPPGTSTWQFNFKFNLTEDMYAQDSIELLTSSGIQFKKHEEEGIETQYFAELFMTSGVVLCEGVKWLSFHSGYDFGYLIKILTNSNLPEVELDFFEILRLFFPVIYDVKYLMKSCKNLKGGLQEVAEQLELKRIGPQHQAGSDSLLTGMAFFKMREMFFEDHIDDAKYCGHLYGLGSGSSYVQNGTGNAYEEEANKQS</sequence>
<comment type="function">
    <text>Has 3'-5' poly(A) exoribonuclease activity for synthetic poly(A) RNA substrate. Catalytic component of the CCR4-NOT complex which is one of the major cellular mRNA deadenylases and is linked to various cellular processes including bulk mRNA degradation, miRNA-mediated repression, translational repression during translational initiation and general transcription regulation. During miRNA-mediated repression the complex also seems to act as translational repressor during translational initiation. Additional complex functions may be a consequence of its influence on mRNA expression.</text>
</comment>
<comment type="catalytic activity">
    <reaction>
        <text>Exonucleolytic cleavage of poly(A) to 5'-AMP.</text>
        <dbReference type="EC" id="3.1.13.4"/>
    </reaction>
</comment>
<comment type="cofactor">
    <cofactor evidence="2">
        <name>Mn(2+)</name>
        <dbReference type="ChEBI" id="CHEBI:29035"/>
    </cofactor>
    <cofactor evidence="2">
        <name>Mg(2+)</name>
        <dbReference type="ChEBI" id="CHEBI:18420"/>
    </cofactor>
    <cofactor evidence="2">
        <name>Co(2+)</name>
        <dbReference type="ChEBI" id="CHEBI:48828"/>
    </cofactor>
    <text evidence="2">Binds 2 divalent metal cations per subunit with RNAase activity being higher in presence of Mn(2+) than of Mg(2+) or Co(2+).</text>
</comment>
<comment type="subunit">
    <text>Component of the CCR4-NOT complex.</text>
</comment>
<comment type="subcellular location">
    <subcellularLocation>
        <location evidence="1">Nucleus</location>
    </subcellularLocation>
    <subcellularLocation>
        <location evidence="1">Cytoplasm</location>
    </subcellularLocation>
</comment>
<comment type="similarity">
    <text evidence="3">Belongs to the CAF1 family.</text>
</comment>